<name>NFI_SULAC</name>
<dbReference type="EC" id="3.1.21.7" evidence="1"/>
<dbReference type="EMBL" id="CP000077">
    <property type="protein sequence ID" value="AAY79940.1"/>
    <property type="molecule type" value="Genomic_DNA"/>
</dbReference>
<dbReference type="RefSeq" id="WP_011277442.1">
    <property type="nucleotide sequence ID" value="NC_007181.1"/>
</dbReference>
<dbReference type="SMR" id="Q4JB89"/>
<dbReference type="STRING" id="330779.Saci_0544"/>
<dbReference type="GeneID" id="14551070"/>
<dbReference type="KEGG" id="sai:Saci_0544"/>
<dbReference type="PATRIC" id="fig|330779.12.peg.529"/>
<dbReference type="eggNOG" id="arCOG00929">
    <property type="taxonomic scope" value="Archaea"/>
</dbReference>
<dbReference type="HOGENOM" id="CLU_047631_1_1_2"/>
<dbReference type="Proteomes" id="UP000001018">
    <property type="component" value="Chromosome"/>
</dbReference>
<dbReference type="GO" id="GO:0005737">
    <property type="term" value="C:cytoplasm"/>
    <property type="evidence" value="ECO:0007669"/>
    <property type="project" value="UniProtKB-SubCell"/>
</dbReference>
<dbReference type="GO" id="GO:0043737">
    <property type="term" value="F:deoxyribonuclease V activity"/>
    <property type="evidence" value="ECO:0007669"/>
    <property type="project" value="UniProtKB-UniRule"/>
</dbReference>
<dbReference type="GO" id="GO:0000287">
    <property type="term" value="F:magnesium ion binding"/>
    <property type="evidence" value="ECO:0007669"/>
    <property type="project" value="UniProtKB-UniRule"/>
</dbReference>
<dbReference type="GO" id="GO:0016891">
    <property type="term" value="F:RNA endonuclease activity, producing 5'-phosphomonoesters"/>
    <property type="evidence" value="ECO:0007669"/>
    <property type="project" value="TreeGrafter"/>
</dbReference>
<dbReference type="GO" id="GO:0003727">
    <property type="term" value="F:single-stranded RNA binding"/>
    <property type="evidence" value="ECO:0007669"/>
    <property type="project" value="TreeGrafter"/>
</dbReference>
<dbReference type="GO" id="GO:0006281">
    <property type="term" value="P:DNA repair"/>
    <property type="evidence" value="ECO:0007669"/>
    <property type="project" value="UniProtKB-UniRule"/>
</dbReference>
<dbReference type="CDD" id="cd06559">
    <property type="entry name" value="Endonuclease_V"/>
    <property type="match status" value="1"/>
</dbReference>
<dbReference type="Gene3D" id="3.30.2170.10">
    <property type="entry name" value="archaeoglobus fulgidus dsm 4304 superfamily"/>
    <property type="match status" value="1"/>
</dbReference>
<dbReference type="HAMAP" id="MF_00801">
    <property type="entry name" value="Endonuclease_5"/>
    <property type="match status" value="1"/>
</dbReference>
<dbReference type="InterPro" id="IPR007581">
    <property type="entry name" value="Endonuclease-V"/>
</dbReference>
<dbReference type="PANTHER" id="PTHR28511">
    <property type="entry name" value="ENDONUCLEASE V"/>
    <property type="match status" value="1"/>
</dbReference>
<dbReference type="PANTHER" id="PTHR28511:SF1">
    <property type="entry name" value="ENDONUCLEASE V"/>
    <property type="match status" value="1"/>
</dbReference>
<dbReference type="Pfam" id="PF04493">
    <property type="entry name" value="Endonuclease_5"/>
    <property type="match status" value="1"/>
</dbReference>
<gene>
    <name evidence="1" type="primary">nfi</name>
    <name type="ordered locus">Saci_0544</name>
</gene>
<sequence>MEDFMIEFLSKLQIFISKNITIKRLGIENIKNLCGVDIAYKGNIGYAVSVMFDGKDYFHKYVKGKVDFPYIPGYLFMREAPLMIKAVESFQCDLILVDGHGMAHPRKSGIASVIGVILDKPTIGVAKSKLYGDIVEEGSTNFIVVNGDKVGVKVGKYYYSIGNKVDIDDVVELSRNGYPKVLALADKLSKELKKKE</sequence>
<evidence type="ECO:0000255" key="1">
    <source>
        <dbReference type="HAMAP-Rule" id="MF_00801"/>
    </source>
</evidence>
<keyword id="KW-0963">Cytoplasm</keyword>
<keyword id="KW-0227">DNA damage</keyword>
<keyword id="KW-0234">DNA repair</keyword>
<keyword id="KW-0255">Endonuclease</keyword>
<keyword id="KW-0378">Hydrolase</keyword>
<keyword id="KW-0460">Magnesium</keyword>
<keyword id="KW-0479">Metal-binding</keyword>
<keyword id="KW-0540">Nuclease</keyword>
<keyword id="KW-1185">Reference proteome</keyword>
<proteinExistence type="inferred from homology"/>
<feature type="chain" id="PRO_0000159694" description="Endonuclease V">
    <location>
        <begin position="1"/>
        <end position="196"/>
    </location>
</feature>
<feature type="binding site" evidence="1">
    <location>
        <position position="37"/>
    </location>
    <ligand>
        <name>Mg(2+)</name>
        <dbReference type="ChEBI" id="CHEBI:18420"/>
    </ligand>
</feature>
<feature type="binding site" evidence="1">
    <location>
        <position position="98"/>
    </location>
    <ligand>
        <name>Mg(2+)</name>
        <dbReference type="ChEBI" id="CHEBI:18420"/>
    </ligand>
</feature>
<feature type="site" description="Interaction with target DNA" evidence="1">
    <location>
        <position position="70"/>
    </location>
</feature>
<organism>
    <name type="scientific">Sulfolobus acidocaldarius (strain ATCC 33909 / DSM 639 / JCM 8929 / NBRC 15157 / NCIMB 11770)</name>
    <dbReference type="NCBI Taxonomy" id="330779"/>
    <lineage>
        <taxon>Archaea</taxon>
        <taxon>Thermoproteota</taxon>
        <taxon>Thermoprotei</taxon>
        <taxon>Sulfolobales</taxon>
        <taxon>Sulfolobaceae</taxon>
        <taxon>Sulfolobus</taxon>
    </lineage>
</organism>
<reference key="1">
    <citation type="journal article" date="2005" name="J. Bacteriol.">
        <title>The genome of Sulfolobus acidocaldarius, a model organism of the Crenarchaeota.</title>
        <authorList>
            <person name="Chen L."/>
            <person name="Bruegger K."/>
            <person name="Skovgaard M."/>
            <person name="Redder P."/>
            <person name="She Q."/>
            <person name="Torarinsson E."/>
            <person name="Greve B."/>
            <person name="Awayez M."/>
            <person name="Zibat A."/>
            <person name="Klenk H.-P."/>
            <person name="Garrett R.A."/>
        </authorList>
    </citation>
    <scope>NUCLEOTIDE SEQUENCE [LARGE SCALE GENOMIC DNA]</scope>
    <source>
        <strain>ATCC 33909 / DSM 639 / JCM 8929 / NBRC 15157 / NCIMB 11770</strain>
    </source>
</reference>
<accession>Q4JB89</accession>
<comment type="function">
    <text evidence="1">DNA repair enzyme involved in the repair of deaminated bases. Selectively cleaves double-stranded DNA at the second phosphodiester bond 3' to a deoxyinosine leaving behind the intact lesion on the nicked DNA.</text>
</comment>
<comment type="catalytic activity">
    <reaction evidence="1">
        <text>Endonucleolytic cleavage at apurinic or apyrimidinic sites to products with a 5'-phosphate.</text>
        <dbReference type="EC" id="3.1.21.7"/>
    </reaction>
</comment>
<comment type="cofactor">
    <cofactor evidence="1">
        <name>Mg(2+)</name>
        <dbReference type="ChEBI" id="CHEBI:18420"/>
    </cofactor>
</comment>
<comment type="subcellular location">
    <subcellularLocation>
        <location evidence="1">Cytoplasm</location>
    </subcellularLocation>
</comment>
<comment type="similarity">
    <text evidence="1">Belongs to the endonuclease V family.</text>
</comment>
<protein>
    <recommendedName>
        <fullName evidence="1">Endonuclease V</fullName>
        <ecNumber evidence="1">3.1.21.7</ecNumber>
    </recommendedName>
    <alternativeName>
        <fullName evidence="1">Deoxyinosine 3'endonuclease</fullName>
    </alternativeName>
    <alternativeName>
        <fullName evidence="1">Deoxyribonuclease V</fullName>
        <shortName evidence="1">DNase V</shortName>
    </alternativeName>
</protein>